<sequence>MSPSVLEPQSVPTLVNVGLKAVGRNDAPVERDARGLSKPLLELMPTLGTDAFTFSPIRESTVSRAMTRRYFADLDAHAETDIVIVGAGSCGLSAAYVLSTLRPDLRITIVEAGVAPGGGAWLGGQLFSAMVMRKPADVFLDEVGVPYEDEGDYVVVKHAALFTSTVLSKVLQRPNVKLFNATTVEDLITRKHHAESSSSSDDGEAEDEAKVRIAGVVTNWTLVSMHHDDQSCMDPNTINAPVIISTTGHDGPFGAFSVKRLVSMKQMERLNGMRGLDMQSAEDAIVNNTREIVPGLIVGGMELSEIDGANRMGPTFGAMALSGVKAAHEAIRVFDLRKAQNDKC</sequence>
<evidence type="ECO:0000255" key="1">
    <source>
        <dbReference type="HAMAP-Rule" id="MF_03158"/>
    </source>
</evidence>
<evidence type="ECO:0000269" key="2">
    <source>
    </source>
</evidence>
<evidence type="ECO:0000269" key="3">
    <source>
    </source>
</evidence>
<evidence type="ECO:0000269" key="4">
    <source ref="4"/>
</evidence>
<evidence type="ECO:0000305" key="5"/>
<evidence type="ECO:0007829" key="6">
    <source>
        <dbReference type="PDB" id="3JSK"/>
    </source>
</evidence>
<comment type="function">
    <text evidence="1 3">Involved in biosynthesis of the thiamine precursor thiazole. Catalyzes the conversion of NAD and glycine to adenosine diphosphate 5-(2-hydroxyethyl)-4-methylthiazole-2-carboxylic acid (ADT), an adenylated thiazole intermediate. The reaction includes an iron-dependent sulfide transfer from a conserved cysteine residue of the protein to a thiazole intermediate. The enzyme can only undergo a single turnover, which suggests it is a suicide enzyme. May have additional roles in adaptation to various stress conditions and in DNA damage tolerance.</text>
</comment>
<comment type="catalytic activity">
    <reaction evidence="1">
        <text>[ADP-thiazole synthase]-L-cysteine + glycine + NAD(+) = [ADP-thiazole synthase]-dehydroalanine + ADP-5-ethyl-4-methylthiazole-2-carboxylate + nicotinamide + 3 H2O + 2 H(+)</text>
        <dbReference type="Rhea" id="RHEA:55708"/>
        <dbReference type="Rhea" id="RHEA-COMP:14264"/>
        <dbReference type="Rhea" id="RHEA-COMP:14265"/>
        <dbReference type="ChEBI" id="CHEBI:15377"/>
        <dbReference type="ChEBI" id="CHEBI:15378"/>
        <dbReference type="ChEBI" id="CHEBI:17154"/>
        <dbReference type="ChEBI" id="CHEBI:29950"/>
        <dbReference type="ChEBI" id="CHEBI:57305"/>
        <dbReference type="ChEBI" id="CHEBI:57540"/>
        <dbReference type="ChEBI" id="CHEBI:90873"/>
        <dbReference type="ChEBI" id="CHEBI:139151"/>
        <dbReference type="EC" id="2.4.2.60"/>
    </reaction>
</comment>
<comment type="cofactor">
    <cofactor evidence="1">
        <name>Fe cation</name>
        <dbReference type="ChEBI" id="CHEBI:24875"/>
    </cofactor>
    <text evidence="1">Binds 1 Fe cation per subunit.</text>
</comment>
<comment type="subunit">
    <text evidence="1 2 4">Homooctamer (By similarity). Interacts with cyp-41.</text>
</comment>
<comment type="subcellular location">
    <subcellularLocation>
        <location evidence="1">Cytoplasm</location>
    </subcellularLocation>
    <subcellularLocation>
        <location evidence="1">Nucleus</location>
    </subcellularLocation>
</comment>
<comment type="induction">
    <text evidence="3">Repressed by thiamine, but not by thiazole. Induced by various stress conditions, including heat, cold or osmotic shock.</text>
</comment>
<comment type="PTM">
    <text evidence="1">During the catalytic reaction, a sulfide is transferred from Cys-232 to a reaction intermediate, generating a dehydroalanine residue.</text>
</comment>
<comment type="similarity">
    <text evidence="1">Belongs to the THI4 family.</text>
</comment>
<proteinExistence type="evidence at protein level"/>
<protein>
    <recommendedName>
        <fullName evidence="1">Thiamine thiazole synthase</fullName>
        <ecNumber evidence="1">2.4.2.60</ecNumber>
    </recommendedName>
    <alternativeName>
        <fullName>37 kDa NcCyP41-binding protein</fullName>
        <shortName>CyPBP37</shortName>
    </alternativeName>
    <alternativeName>
        <fullName evidence="1">Thiazole biosynthetic enzyme</fullName>
    </alternativeName>
</protein>
<feature type="chain" id="PRO_0000415877" description="Thiamine thiazole synthase">
    <location>
        <begin position="1"/>
        <end position="344"/>
    </location>
</feature>
<feature type="binding site">
    <location>
        <position position="90"/>
    </location>
    <ligand>
        <name>substrate</name>
    </ligand>
</feature>
<feature type="binding site">
    <location>
        <begin position="111"/>
        <end position="112"/>
    </location>
    <ligand>
        <name>substrate</name>
    </ligand>
</feature>
<feature type="binding site">
    <location>
        <position position="119"/>
    </location>
    <ligand>
        <name>substrate</name>
    </ligand>
</feature>
<feature type="binding site">
    <location>
        <position position="184"/>
    </location>
    <ligand>
        <name>substrate</name>
    </ligand>
</feature>
<feature type="binding site">
    <location>
        <position position="234"/>
    </location>
    <ligand>
        <name>substrate</name>
    </ligand>
</feature>
<feature type="binding site">
    <location>
        <position position="249"/>
    </location>
    <ligand>
        <name>substrate</name>
    </ligand>
</feature>
<feature type="binding site">
    <location>
        <position position="301"/>
    </location>
    <ligand>
        <name>substrate</name>
    </ligand>
</feature>
<feature type="binding site">
    <location>
        <begin position="311"/>
        <end position="313"/>
    </location>
    <ligand>
        <name>substrate</name>
    </ligand>
</feature>
<feature type="modified residue" description="2,3-didehydroalanine (Cys)" evidence="1">
    <location>
        <position position="232"/>
    </location>
</feature>
<feature type="sequence conflict" description="In Ref. 1; AA sequence." evidence="5" ref="1">
    <original>R</original>
    <variation>RV</variation>
    <location>
        <position position="31"/>
    </location>
</feature>
<feature type="helix" evidence="6">
    <location>
        <begin position="38"/>
        <end position="43"/>
    </location>
</feature>
<feature type="helix" evidence="6">
    <location>
        <begin position="44"/>
        <end position="46"/>
    </location>
</feature>
<feature type="helix" evidence="6">
    <location>
        <begin position="59"/>
        <end position="78"/>
    </location>
</feature>
<feature type="strand" evidence="6">
    <location>
        <begin position="81"/>
        <end position="85"/>
    </location>
</feature>
<feature type="helix" evidence="6">
    <location>
        <begin position="89"/>
        <end position="101"/>
    </location>
</feature>
<feature type="strand" evidence="6">
    <location>
        <begin position="107"/>
        <end position="115"/>
    </location>
</feature>
<feature type="turn" evidence="6">
    <location>
        <begin position="118"/>
        <end position="121"/>
    </location>
</feature>
<feature type="strand" evidence="6">
    <location>
        <begin position="130"/>
        <end position="133"/>
    </location>
</feature>
<feature type="turn" evidence="6">
    <location>
        <begin position="134"/>
        <end position="136"/>
    </location>
</feature>
<feature type="helix" evidence="6">
    <location>
        <begin position="137"/>
        <end position="143"/>
    </location>
</feature>
<feature type="strand" evidence="6">
    <location>
        <begin position="151"/>
        <end position="157"/>
    </location>
</feature>
<feature type="helix" evidence="6">
    <location>
        <begin position="159"/>
        <end position="171"/>
    </location>
</feature>
<feature type="strand" evidence="6">
    <location>
        <begin position="176"/>
        <end position="180"/>
    </location>
</feature>
<feature type="strand" evidence="6">
    <location>
        <begin position="182"/>
        <end position="191"/>
    </location>
</feature>
<feature type="strand" evidence="6">
    <location>
        <begin position="211"/>
        <end position="220"/>
    </location>
</feature>
<feature type="helix" evidence="6">
    <location>
        <begin position="221"/>
        <end position="224"/>
    </location>
</feature>
<feature type="strand" evidence="6">
    <location>
        <begin position="227"/>
        <end position="229"/>
    </location>
</feature>
<feature type="strand" evidence="6">
    <location>
        <begin position="236"/>
        <end position="239"/>
    </location>
</feature>
<feature type="strand" evidence="6">
    <location>
        <begin position="241"/>
        <end position="245"/>
    </location>
</feature>
<feature type="strand" evidence="6">
    <location>
        <begin position="249"/>
        <end position="254"/>
    </location>
</feature>
<feature type="helix" evidence="6">
    <location>
        <begin position="256"/>
        <end position="263"/>
    </location>
</feature>
<feature type="strand" evidence="6">
    <location>
        <begin position="266"/>
        <end position="268"/>
    </location>
</feature>
<feature type="strand" evidence="6">
    <location>
        <begin position="274"/>
        <end position="276"/>
    </location>
</feature>
<feature type="helix" evidence="6">
    <location>
        <begin position="278"/>
        <end position="287"/>
    </location>
</feature>
<feature type="strand" evidence="6">
    <location>
        <begin position="290"/>
        <end position="293"/>
    </location>
</feature>
<feature type="strand" evidence="6">
    <location>
        <begin position="296"/>
        <end position="298"/>
    </location>
</feature>
<feature type="helix" evidence="6">
    <location>
        <begin position="300"/>
        <end position="302"/>
    </location>
</feature>
<feature type="helix" evidence="6">
    <location>
        <begin position="303"/>
        <end position="307"/>
    </location>
</feature>
<feature type="helix" evidence="6">
    <location>
        <begin position="317"/>
        <end position="341"/>
    </location>
</feature>
<organism>
    <name type="scientific">Neurospora crassa (strain ATCC 24698 / 74-OR23-1A / CBS 708.71 / DSM 1257 / FGSC 987)</name>
    <dbReference type="NCBI Taxonomy" id="367110"/>
    <lineage>
        <taxon>Eukaryota</taxon>
        <taxon>Fungi</taxon>
        <taxon>Dikarya</taxon>
        <taxon>Ascomycota</taxon>
        <taxon>Pezizomycotina</taxon>
        <taxon>Sordariomycetes</taxon>
        <taxon>Sordariomycetidae</taxon>
        <taxon>Sordariales</taxon>
        <taxon>Sordariaceae</taxon>
        <taxon>Neurospora</taxon>
    </lineage>
</organism>
<name>THI4_NEUCR</name>
<reference key="1">
    <citation type="journal article" date="2003" name="J. Mol. Biol.">
        <title>A novel binding protein for a member of CyP40-type Cyclophilins: N.crassa CyPBP37, a growth and thiamine regulated protein homolog to yeast Thi4p.</title>
        <authorList>
            <person name="Faou P."/>
            <person name="Tropschug M."/>
        </authorList>
    </citation>
    <scope>NUCLEOTIDE SEQUENCE [MRNA]</scope>
    <scope>PROTEIN SEQUENCE OF 5-16; 22-34; 158-169; 178-191; 260-265 AND 326-338</scope>
    <scope>INTERACTION WITH CYP-41</scope>
    <source>
        <strain>74A</strain>
    </source>
</reference>
<reference key="2">
    <citation type="journal article" date="2003" name="Nature">
        <title>The genome sequence of the filamentous fungus Neurospora crassa.</title>
        <authorList>
            <person name="Galagan J.E."/>
            <person name="Calvo S.E."/>
            <person name="Borkovich K.A."/>
            <person name="Selker E.U."/>
            <person name="Read N.D."/>
            <person name="Jaffe D.B."/>
            <person name="FitzHugh W."/>
            <person name="Ma L.-J."/>
            <person name="Smirnov S."/>
            <person name="Purcell S."/>
            <person name="Rehman B."/>
            <person name="Elkins T."/>
            <person name="Engels R."/>
            <person name="Wang S."/>
            <person name="Nielsen C.B."/>
            <person name="Butler J."/>
            <person name="Endrizzi M."/>
            <person name="Qui D."/>
            <person name="Ianakiev P."/>
            <person name="Bell-Pedersen D."/>
            <person name="Nelson M.A."/>
            <person name="Werner-Washburne M."/>
            <person name="Selitrennikoff C.P."/>
            <person name="Kinsey J.A."/>
            <person name="Braun E.L."/>
            <person name="Zelter A."/>
            <person name="Schulte U."/>
            <person name="Kothe G.O."/>
            <person name="Jedd G."/>
            <person name="Mewes H.-W."/>
            <person name="Staben C."/>
            <person name="Marcotte E."/>
            <person name="Greenberg D."/>
            <person name="Roy A."/>
            <person name="Foley K."/>
            <person name="Naylor J."/>
            <person name="Stange-Thomann N."/>
            <person name="Barrett R."/>
            <person name="Gnerre S."/>
            <person name="Kamal M."/>
            <person name="Kamvysselis M."/>
            <person name="Mauceli E.W."/>
            <person name="Bielke C."/>
            <person name="Rudd S."/>
            <person name="Frishman D."/>
            <person name="Krystofova S."/>
            <person name="Rasmussen C."/>
            <person name="Metzenberg R.L."/>
            <person name="Perkins D.D."/>
            <person name="Kroken S."/>
            <person name="Cogoni C."/>
            <person name="Macino G."/>
            <person name="Catcheside D.E.A."/>
            <person name="Li W."/>
            <person name="Pratt R.J."/>
            <person name="Osmani S.A."/>
            <person name="DeSouza C.P.C."/>
            <person name="Glass N.L."/>
            <person name="Orbach M.J."/>
            <person name="Berglund J.A."/>
            <person name="Voelker R."/>
            <person name="Yarden O."/>
            <person name="Plamann M."/>
            <person name="Seiler S."/>
            <person name="Dunlap J.C."/>
            <person name="Radford A."/>
            <person name="Aramayo R."/>
            <person name="Natvig D.O."/>
            <person name="Alex L.A."/>
            <person name="Mannhaupt G."/>
            <person name="Ebbole D.J."/>
            <person name="Freitag M."/>
            <person name="Paulsen I."/>
            <person name="Sachs M.S."/>
            <person name="Lander E.S."/>
            <person name="Nusbaum C."/>
            <person name="Birren B.W."/>
        </authorList>
    </citation>
    <scope>NUCLEOTIDE SEQUENCE [LARGE SCALE GENOMIC DNA]</scope>
    <source>
        <strain>ATCC 24698 / 74-OR23-1A / CBS 708.71 / DSM 1257 / FGSC 987</strain>
    </source>
</reference>
<reference key="3">
    <citation type="journal article" date="2004" name="J. Mol. Biol.">
        <title>Neurospora crassa CyPBP37: a cytosolic stress protein that is able to replace yeast Thi4p function in the synthesis of vitamin B1.</title>
        <authorList>
            <person name="Faou P."/>
            <person name="Tropschug M."/>
        </authorList>
    </citation>
    <scope>PROTEIN SEQUENCE OF 2-8</scope>
    <scope>FUNCTION</scope>
    <scope>SUBCELLULAR LOCATION</scope>
    <scope>INDUCTION</scope>
</reference>
<reference key="4">
    <citation type="submission" date="2009-09" db="PDB data bank">
        <title>Crystal structure of thiazole synthase Thi4 from Neurospora crassa.</title>
        <authorList>
            <person name="Kang Y.N."/>
            <person name="Bale S."/>
            <person name="Begley T.P."/>
            <person name="Ealick S.E."/>
        </authorList>
    </citation>
    <scope>X-RAY CRYSTALLOGRAPHY (2.70 ANGSTROMS) IN COMPLEX WITH ADT</scope>
    <scope>IRON-BINDING</scope>
</reference>
<dbReference type="EC" id="2.4.2.60" evidence="1"/>
<dbReference type="EMBL" id="AJ297565">
    <property type="protein sequence ID" value="CAC03570.1"/>
    <property type="molecule type" value="mRNA"/>
</dbReference>
<dbReference type="EMBL" id="CM002242">
    <property type="protein sequence ID" value="ESA41902.1"/>
    <property type="molecule type" value="Genomic_DNA"/>
</dbReference>
<dbReference type="EMBL" id="CM002242">
    <property type="protein sequence ID" value="ESA41903.1"/>
    <property type="molecule type" value="Genomic_DNA"/>
</dbReference>
<dbReference type="EMBL" id="CM002242">
    <property type="protein sequence ID" value="ESA41904.1"/>
    <property type="molecule type" value="Genomic_DNA"/>
</dbReference>
<dbReference type="EMBL" id="CM002242">
    <property type="protein sequence ID" value="ESA41905.1"/>
    <property type="molecule type" value="Genomic_DNA"/>
</dbReference>
<dbReference type="RefSeq" id="XP_011395239.1">
    <property type="nucleotide sequence ID" value="XM_011396937.1"/>
</dbReference>
<dbReference type="RefSeq" id="XP_011395240.1">
    <property type="nucleotide sequence ID" value="XM_011396938.1"/>
</dbReference>
<dbReference type="RefSeq" id="XP_011395241.1">
    <property type="nucleotide sequence ID" value="XM_011396939.1"/>
</dbReference>
<dbReference type="RefSeq" id="XP_011395242.1">
    <property type="nucleotide sequence ID" value="XM_011396940.1"/>
</dbReference>
<dbReference type="PDB" id="3JSK">
    <property type="method" value="X-ray"/>
    <property type="resolution" value="2.70 A"/>
    <property type="chains" value="A/B/C/D/E/F/G/H/I/J/K/L/M/N/O/P=1-344"/>
</dbReference>
<dbReference type="PDBsum" id="3JSK"/>
<dbReference type="SMR" id="Q1K6I4"/>
<dbReference type="FunCoup" id="Q1K6I4">
    <property type="interactions" value="800"/>
</dbReference>
<dbReference type="STRING" id="367110.Q1K6I4"/>
<dbReference type="PaxDb" id="5141-EFNCRP00000005451"/>
<dbReference type="EnsemblFungi" id="ESA41902">
    <property type="protein sequence ID" value="ESA41902"/>
    <property type="gene ID" value="NCU06110"/>
</dbReference>
<dbReference type="EnsemblFungi" id="ESA41903">
    <property type="protein sequence ID" value="ESA41903"/>
    <property type="gene ID" value="NCU06110"/>
</dbReference>
<dbReference type="EnsemblFungi" id="ESA41904">
    <property type="protein sequence ID" value="ESA41904"/>
    <property type="gene ID" value="NCU06110"/>
</dbReference>
<dbReference type="EnsemblFungi" id="ESA41905">
    <property type="protein sequence ID" value="ESA41905"/>
    <property type="gene ID" value="NCU06110"/>
</dbReference>
<dbReference type="GeneID" id="3876110"/>
<dbReference type="KEGG" id="ncr:NCU06110"/>
<dbReference type="VEuPathDB" id="FungiDB:NCU06110"/>
<dbReference type="HOGENOM" id="CLU_053727_0_0_1"/>
<dbReference type="InParanoid" id="Q1K6I4"/>
<dbReference type="OMA" id="MFPRIVV"/>
<dbReference type="OrthoDB" id="410463at2759"/>
<dbReference type="BRENDA" id="2.4.2.60">
    <property type="organism ID" value="3627"/>
</dbReference>
<dbReference type="EvolutionaryTrace" id="Q1K6I4"/>
<dbReference type="Proteomes" id="UP000001805">
    <property type="component" value="Chromosome 7, Linkage Group VII"/>
</dbReference>
<dbReference type="GO" id="GO:0005829">
    <property type="term" value="C:cytosol"/>
    <property type="evidence" value="ECO:0007669"/>
    <property type="project" value="UniProtKB-UniRule"/>
</dbReference>
<dbReference type="GO" id="GO:0005634">
    <property type="term" value="C:nucleus"/>
    <property type="evidence" value="ECO:0007669"/>
    <property type="project" value="UniProtKB-SubCell"/>
</dbReference>
<dbReference type="GO" id="GO:0160205">
    <property type="term" value="F:cysteine-dependent adenosine diphosphate thiazole synthase activity"/>
    <property type="evidence" value="ECO:0007669"/>
    <property type="project" value="UniProtKB-EC"/>
</dbReference>
<dbReference type="GO" id="GO:0008198">
    <property type="term" value="F:ferrous iron binding"/>
    <property type="evidence" value="ECO:0007669"/>
    <property type="project" value="EnsemblFungi"/>
</dbReference>
<dbReference type="GO" id="GO:0005506">
    <property type="term" value="F:iron ion binding"/>
    <property type="evidence" value="ECO:0000318"/>
    <property type="project" value="GO_Central"/>
</dbReference>
<dbReference type="GO" id="GO:0000002">
    <property type="term" value="P:mitochondrial genome maintenance"/>
    <property type="evidence" value="ECO:0007669"/>
    <property type="project" value="EnsemblFungi"/>
</dbReference>
<dbReference type="GO" id="GO:0009228">
    <property type="term" value="P:thiamine biosynthetic process"/>
    <property type="evidence" value="ECO:0007669"/>
    <property type="project" value="UniProtKB-UniRule"/>
</dbReference>
<dbReference type="GO" id="GO:0052837">
    <property type="term" value="P:thiazole biosynthetic process"/>
    <property type="evidence" value="ECO:0000318"/>
    <property type="project" value="GO_Central"/>
</dbReference>
<dbReference type="Gene3D" id="6.10.250.2840">
    <property type="match status" value="1"/>
</dbReference>
<dbReference type="Gene3D" id="3.50.50.60">
    <property type="entry name" value="FAD/NAD(P)-binding domain"/>
    <property type="match status" value="1"/>
</dbReference>
<dbReference type="HAMAP" id="MF_03158">
    <property type="entry name" value="THI4"/>
    <property type="match status" value="1"/>
</dbReference>
<dbReference type="InterPro" id="IPR036188">
    <property type="entry name" value="FAD/NAD-bd_sf"/>
</dbReference>
<dbReference type="InterPro" id="IPR027495">
    <property type="entry name" value="Sti35"/>
</dbReference>
<dbReference type="InterPro" id="IPR002922">
    <property type="entry name" value="Thi4_fam"/>
</dbReference>
<dbReference type="NCBIfam" id="TIGR00292">
    <property type="entry name" value="sulfide-dependent adenosine diphosphate thiazole synthase"/>
    <property type="match status" value="1"/>
</dbReference>
<dbReference type="PANTHER" id="PTHR43422">
    <property type="entry name" value="THIAMINE THIAZOLE SYNTHASE"/>
    <property type="match status" value="1"/>
</dbReference>
<dbReference type="PANTHER" id="PTHR43422:SF3">
    <property type="entry name" value="THIAMINE THIAZOLE SYNTHASE"/>
    <property type="match status" value="1"/>
</dbReference>
<dbReference type="Pfam" id="PF01946">
    <property type="entry name" value="Thi4"/>
    <property type="match status" value="1"/>
</dbReference>
<dbReference type="SUPFAM" id="SSF51905">
    <property type="entry name" value="FAD/NAD(P)-binding domain"/>
    <property type="match status" value="1"/>
</dbReference>
<gene>
    <name type="ORF">NCU06110</name>
</gene>
<accession>Q1K6I4</accession>
<accession>Q9HGR2</accession>
<accession>V5IKI8</accession>
<keyword id="KW-0002">3D-structure</keyword>
<keyword id="KW-0963">Cytoplasm</keyword>
<keyword id="KW-0903">Direct protein sequencing</keyword>
<keyword id="KW-0408">Iron</keyword>
<keyword id="KW-0479">Metal-binding</keyword>
<keyword id="KW-0520">NAD</keyword>
<keyword id="KW-0539">Nucleus</keyword>
<keyword id="KW-1185">Reference proteome</keyword>
<keyword id="KW-0784">Thiamine biosynthesis</keyword>
<keyword id="KW-0808">Transferase</keyword>